<proteinExistence type="predicted"/>
<dbReference type="EMBL" id="M33002">
    <property type="protein sequence ID" value="AAA86438.1"/>
    <property type="molecule type" value="Genomic_RNA"/>
</dbReference>
<dbReference type="PIR" id="E35523">
    <property type="entry name" value="E35523"/>
</dbReference>
<dbReference type="RefSeq" id="NP_056829.1">
    <property type="nucleotide sequence ID" value="NC_001777.1"/>
</dbReference>
<dbReference type="KEGG" id="vg:1493901"/>
<dbReference type="Proteomes" id="UP000000575">
    <property type="component" value="Genome"/>
</dbReference>
<keyword id="KW-1185">Reference proteome</keyword>
<name>P7_TNVA</name>
<accession>P22962</accession>
<feature type="chain" id="PRO_0000222904" description="Uncharacterized protein p7">
    <location>
        <begin position="1"/>
        <end position="59"/>
    </location>
</feature>
<gene>
    <name type="ORF">ORF5</name>
</gene>
<reference key="1">
    <citation type="journal article" date="1990" name="Virology">
        <title>Genome structure of tobacco necrosis virus strain A.</title>
        <authorList>
            <person name="Meulewaeter F."/>
            <person name="Seurinck J."/>
            <person name="van Emmelo J."/>
        </authorList>
    </citation>
    <scope>NUCLEOTIDE SEQUENCE [GENOMIC RNA]</scope>
</reference>
<organismHost>
    <name type="scientific">Chenopodium amaranticolor</name>
    <dbReference type="NCBI Taxonomy" id="66262"/>
</organismHost>
<organismHost>
    <name type="scientific">Chenopodium quinoa</name>
    <name type="common">Quinoa</name>
    <dbReference type="NCBI Taxonomy" id="63459"/>
</organismHost>
<organismHost>
    <name type="scientific">Cucumis sativus</name>
    <name type="common">Cucumber</name>
    <dbReference type="NCBI Taxonomy" id="3659"/>
</organismHost>
<organismHost>
    <name type="scientific">Nicotiana clevelandii</name>
    <name type="common">Wild tobacco</name>
    <dbReference type="NCBI Taxonomy" id="81866"/>
</organismHost>
<organismHost>
    <name type="scientific">Nicotiana tabacum</name>
    <name type="common">Common tobacco</name>
    <dbReference type="NCBI Taxonomy" id="4097"/>
</organismHost>
<organismHost>
    <name type="scientific">Phaseolus vulgaris</name>
    <name type="common">Kidney bean</name>
    <name type="synonym">French bean</name>
    <dbReference type="NCBI Taxonomy" id="3885"/>
</organismHost>
<organismHost>
    <name type="scientific">Tulipa gesneriana</name>
    <name type="common">Garden tulip</name>
    <dbReference type="NCBI Taxonomy" id="13306"/>
</organismHost>
<sequence length="59" mass="6684">MPKVESHHWRRRRILGNRLDGRGVVPPTTHHSGYQWYTTMAGSAKVLCTKNPWKRGGGG</sequence>
<protein>
    <recommendedName>
        <fullName>Uncharacterized protein p7</fullName>
    </recommendedName>
</protein>
<organism>
    <name type="scientific">Tobacco necrosis virus (strain A)</name>
    <name type="common">TNV-A</name>
    <dbReference type="NCBI Taxonomy" id="12055"/>
    <lineage>
        <taxon>Viruses</taxon>
        <taxon>Riboviria</taxon>
        <taxon>Orthornavirae</taxon>
        <taxon>Kitrinoviricota</taxon>
        <taxon>Tolucaviricetes</taxon>
        <taxon>Tolivirales</taxon>
        <taxon>Tombusviridae</taxon>
        <taxon>Procedovirinae</taxon>
        <taxon>Alphanecrovirus</taxon>
        <taxon>Alphanecrovirus nicotianae</taxon>
    </lineage>
</organism>